<protein>
    <recommendedName>
        <fullName>Putative protein FAM10A5</fullName>
    </recommendedName>
    <alternativeName>
        <fullName>Suppression of tumorigenicity 13 pseudogene 5</fullName>
    </alternativeName>
</protein>
<gene>
    <name type="primary">ST13P5</name>
    <name type="synonym">FAM10A5</name>
</gene>
<reference key="1">
    <citation type="journal article" date="2002" name="Genomics">
        <title>Characterization of FAM10A4, a member of the ST13 tumor suppressor gene family that maps to the 13q14.3 region associated with B-Cell leukemia, multiple myeloma, and prostate cancer.</title>
        <authorList>
            <person name="Sossey-Alaoui K."/>
            <person name="Kitamura E."/>
            <person name="Head K."/>
            <person name="Cowell J.K."/>
        </authorList>
    </citation>
    <scope>NUCLEOTIDE SEQUENCE [MRNA]</scope>
</reference>
<reference key="2">
    <citation type="journal article" date="2006" name="Nature">
        <title>Human chromosome 11 DNA sequence and analysis including novel gene identification.</title>
        <authorList>
            <person name="Taylor T.D."/>
            <person name="Noguchi H."/>
            <person name="Totoki Y."/>
            <person name="Toyoda A."/>
            <person name="Kuroki Y."/>
            <person name="Dewar K."/>
            <person name="Lloyd C."/>
            <person name="Itoh T."/>
            <person name="Takeda T."/>
            <person name="Kim D.-W."/>
            <person name="She X."/>
            <person name="Barlow K.F."/>
            <person name="Bloom T."/>
            <person name="Bruford E."/>
            <person name="Chang J.L."/>
            <person name="Cuomo C.A."/>
            <person name="Eichler E."/>
            <person name="FitzGerald M.G."/>
            <person name="Jaffe D.B."/>
            <person name="LaButti K."/>
            <person name="Nicol R."/>
            <person name="Park H.-S."/>
            <person name="Seaman C."/>
            <person name="Sougnez C."/>
            <person name="Yang X."/>
            <person name="Zimmer A.R."/>
            <person name="Zody M.C."/>
            <person name="Birren B.W."/>
            <person name="Nusbaum C."/>
            <person name="Fujiyama A."/>
            <person name="Hattori M."/>
            <person name="Rogers J."/>
            <person name="Lander E.S."/>
            <person name="Sakaki Y."/>
        </authorList>
    </citation>
    <scope>NUCLEOTIDE SEQUENCE [LARGE SCALE GENOMIC DNA]</scope>
</reference>
<keyword id="KW-0007">Acetylation</keyword>
<keyword id="KW-0963">Cytoplasm</keyword>
<keyword id="KW-0597">Phosphoprotein</keyword>
<keyword id="KW-1267">Proteomics identification</keyword>
<keyword id="KW-1185">Reference proteome</keyword>
<keyword id="KW-0677">Repeat</keyword>
<keyword id="KW-0802">TPR repeat</keyword>
<dbReference type="EMBL" id="AF512499">
    <property type="protein sequence ID" value="AAM44055.1"/>
    <property type="molecule type" value="mRNA"/>
</dbReference>
<dbReference type="EMBL" id="AC107948">
    <property type="status" value="NOT_ANNOTATED_CDS"/>
    <property type="molecule type" value="Genomic_DNA"/>
</dbReference>
<dbReference type="SMR" id="Q8NFI4"/>
<dbReference type="FunCoup" id="Q8NFI4">
    <property type="interactions" value="1083"/>
</dbReference>
<dbReference type="IntAct" id="Q8NFI4">
    <property type="interactions" value="1"/>
</dbReference>
<dbReference type="GlyConnect" id="2066">
    <property type="glycosylation" value="1 N-Linked glycan (1 site)"/>
</dbReference>
<dbReference type="GlyCosmos" id="Q8NFI4">
    <property type="glycosylation" value="1 site, 2 glycans"/>
</dbReference>
<dbReference type="GlyGen" id="Q8NFI4">
    <property type="glycosylation" value="1 site, 2 N-linked glycans (1 site)"/>
</dbReference>
<dbReference type="iPTMnet" id="Q8NFI4"/>
<dbReference type="SwissPalm" id="Q8NFI4"/>
<dbReference type="BioMuta" id="HGNC:18556"/>
<dbReference type="DMDM" id="74762570"/>
<dbReference type="jPOST" id="Q8NFI4"/>
<dbReference type="MassIVE" id="Q8NFI4"/>
<dbReference type="ProteomicsDB" id="73315"/>
<dbReference type="Pumba" id="Q8NFI4"/>
<dbReference type="AGR" id="HGNC:18556"/>
<dbReference type="GeneCards" id="ST13P5"/>
<dbReference type="HGNC" id="HGNC:18556">
    <property type="gene designation" value="ST13P5"/>
</dbReference>
<dbReference type="neXtProt" id="NX_Q8NFI4"/>
<dbReference type="InParanoid" id="Q8NFI4"/>
<dbReference type="PAN-GO" id="Q8NFI4">
    <property type="GO annotations" value="0 GO annotations based on evolutionary models"/>
</dbReference>
<dbReference type="PhylomeDB" id="Q8NFI4"/>
<dbReference type="PathwayCommons" id="Q8NFI4"/>
<dbReference type="Pharos" id="Q8NFI4">
    <property type="development level" value="Tdark"/>
</dbReference>
<dbReference type="Proteomes" id="UP000005640">
    <property type="component" value="Unplaced"/>
</dbReference>
<dbReference type="RNAct" id="Q8NFI4">
    <property type="molecule type" value="protein"/>
</dbReference>
<dbReference type="GO" id="GO:0005737">
    <property type="term" value="C:cytoplasm"/>
    <property type="evidence" value="ECO:0007669"/>
    <property type="project" value="UniProtKB-SubCell"/>
</dbReference>
<dbReference type="GO" id="GO:0046983">
    <property type="term" value="F:protein dimerization activity"/>
    <property type="evidence" value="ECO:0007669"/>
    <property type="project" value="InterPro"/>
</dbReference>
<dbReference type="CDD" id="cd14438">
    <property type="entry name" value="Hip_N"/>
    <property type="match status" value="1"/>
</dbReference>
<dbReference type="FunFam" id="1.10.260.100:FF:000007">
    <property type="entry name" value="hsc70-interacting protein-like isoform X1"/>
    <property type="match status" value="1"/>
</dbReference>
<dbReference type="FunFam" id="1.25.40.10:FF:000080">
    <property type="entry name" value="hsc70-interacting protein-like isoform X1"/>
    <property type="match status" value="1"/>
</dbReference>
<dbReference type="FunFam" id="6.10.250.3420:FF:000001">
    <property type="entry name" value="Hsc70-interacting protein-like protein"/>
    <property type="match status" value="1"/>
</dbReference>
<dbReference type="Gene3D" id="1.10.260.100">
    <property type="match status" value="1"/>
</dbReference>
<dbReference type="Gene3D" id="6.10.250.3420">
    <property type="match status" value="1"/>
</dbReference>
<dbReference type="Gene3D" id="1.25.40.10">
    <property type="entry name" value="Tetratricopeptide repeat domain"/>
    <property type="match status" value="1"/>
</dbReference>
<dbReference type="InterPro" id="IPR034649">
    <property type="entry name" value="Hip_N"/>
</dbReference>
<dbReference type="InterPro" id="IPR041243">
    <property type="entry name" value="STI1/HOP_DP"/>
</dbReference>
<dbReference type="InterPro" id="IPR006636">
    <property type="entry name" value="STI1_HS-bd"/>
</dbReference>
<dbReference type="InterPro" id="IPR011990">
    <property type="entry name" value="TPR-like_helical_dom_sf"/>
</dbReference>
<dbReference type="InterPro" id="IPR019734">
    <property type="entry name" value="TPR_rpt"/>
</dbReference>
<dbReference type="PANTHER" id="PTHR45883">
    <property type="entry name" value="HSC70-INTERACTING PROTEIN"/>
    <property type="match status" value="1"/>
</dbReference>
<dbReference type="PANTHER" id="PTHR45883:SF6">
    <property type="entry name" value="HSC70-INTERACTING PROTEIN-RELATED"/>
    <property type="match status" value="1"/>
</dbReference>
<dbReference type="Pfam" id="PF18253">
    <property type="entry name" value="HipN"/>
    <property type="match status" value="1"/>
</dbReference>
<dbReference type="Pfam" id="PF17830">
    <property type="entry name" value="STI1-HOP_DP"/>
    <property type="match status" value="1"/>
</dbReference>
<dbReference type="SMART" id="SM00727">
    <property type="entry name" value="STI1"/>
    <property type="match status" value="1"/>
</dbReference>
<dbReference type="SMART" id="SM00028">
    <property type="entry name" value="TPR"/>
    <property type="match status" value="3"/>
</dbReference>
<dbReference type="SUPFAM" id="SSF48452">
    <property type="entry name" value="TPR-like"/>
    <property type="match status" value="1"/>
</dbReference>
<dbReference type="PROSITE" id="PS50005">
    <property type="entry name" value="TPR"/>
    <property type="match status" value="3"/>
</dbReference>
<dbReference type="PROSITE" id="PS50293">
    <property type="entry name" value="TPR_REGION"/>
    <property type="match status" value="1"/>
</dbReference>
<evidence type="ECO:0000250" key="1">
    <source>
        <dbReference type="UniProtKB" id="P50502"/>
    </source>
</evidence>
<evidence type="ECO:0000250" key="2">
    <source>
        <dbReference type="UniProtKB" id="Q99L47"/>
    </source>
</evidence>
<evidence type="ECO:0000256" key="3">
    <source>
        <dbReference type="SAM" id="MobiDB-lite"/>
    </source>
</evidence>
<evidence type="ECO:0000305" key="4"/>
<feature type="chain" id="PRO_0000190817" description="Putative protein FAM10A5">
    <location>
        <begin position="1"/>
        <end position="369"/>
    </location>
</feature>
<feature type="repeat" description="TPR 1">
    <location>
        <begin position="114"/>
        <end position="147"/>
    </location>
</feature>
<feature type="repeat" description="TPR 2">
    <location>
        <begin position="149"/>
        <end position="181"/>
    </location>
</feature>
<feature type="repeat" description="TPR 3">
    <location>
        <begin position="183"/>
        <end position="215"/>
    </location>
</feature>
<feature type="domain" description="STI1">
    <location>
        <begin position="319"/>
        <end position="358"/>
    </location>
</feature>
<feature type="region of interest" description="Disordered" evidence="3">
    <location>
        <begin position="38"/>
        <end position="98"/>
    </location>
</feature>
<feature type="region of interest" description="Disordered" evidence="3">
    <location>
        <begin position="256"/>
        <end position="300"/>
    </location>
</feature>
<feature type="compositionally biased region" description="Basic and acidic residues" evidence="3">
    <location>
        <begin position="49"/>
        <end position="73"/>
    </location>
</feature>
<feature type="compositionally biased region" description="Acidic residues" evidence="3">
    <location>
        <begin position="89"/>
        <end position="98"/>
    </location>
</feature>
<feature type="compositionally biased region" description="Basic and acidic residues" evidence="3">
    <location>
        <begin position="256"/>
        <end position="272"/>
    </location>
</feature>
<feature type="compositionally biased region" description="Gly residues" evidence="3">
    <location>
        <begin position="281"/>
        <end position="300"/>
    </location>
</feature>
<feature type="modified residue" description="Phosphoserine" evidence="1">
    <location>
        <position position="346"/>
    </location>
</feature>
<feature type="modified residue" description="N6-acetyllysine" evidence="2">
    <location>
        <position position="353"/>
    </location>
</feature>
<feature type="modified residue" description="N6-acetyllysine" evidence="2">
    <location>
        <position position="360"/>
    </location>
</feature>
<sequence>MDPCKVNELRAFVKMCKQDPSVLHTEEMRFLREWVESMGGKVPPATQKAKSEENTKEEKPDSKKVEEDLKADEPSTEESDLEIDKEGVIEPDTDAPQEMGDENVEITEEMMDQANDKKVAAIEVLNDGELQKAIDLFTDAIKLNPRLAILYAKRASVFVKLQKPNAAIQDCDRAIEINPDSAQPYKWRGKAHRLLGHWEEAAHDLAFACKLDYDEDASAMLKEVQPRAQKIAEHWRKYERKHEEREIKERIERVKKAQEEQERAQREEEARRQSGAHYGPFPGGFPGGMPGNFPGGMPGMGGDMPGMAGMPGLNEILSDPEALAAMQDPEVMVAFQDVAQNPANMSKYQSNPKVMNLISKLSAKFGGQA</sequence>
<accession>Q8NFI4</accession>
<organism>
    <name type="scientific">Homo sapiens</name>
    <name type="common">Human</name>
    <dbReference type="NCBI Taxonomy" id="9606"/>
    <lineage>
        <taxon>Eukaryota</taxon>
        <taxon>Metazoa</taxon>
        <taxon>Chordata</taxon>
        <taxon>Craniata</taxon>
        <taxon>Vertebrata</taxon>
        <taxon>Euteleostomi</taxon>
        <taxon>Mammalia</taxon>
        <taxon>Eutheria</taxon>
        <taxon>Euarchontoglires</taxon>
        <taxon>Primates</taxon>
        <taxon>Haplorrhini</taxon>
        <taxon>Catarrhini</taxon>
        <taxon>Hominidae</taxon>
        <taxon>Homo</taxon>
    </lineage>
</organism>
<comment type="subcellular location">
    <subcellularLocation>
        <location evidence="4">Cytoplasm</location>
    </subcellularLocation>
</comment>
<comment type="similarity">
    <text evidence="4">Belongs to the FAM10 family.</text>
</comment>
<comment type="caution">
    <text evidence="4">Could be the product of a pseudogene.</text>
</comment>
<proteinExistence type="uncertain"/>
<name>F10A5_HUMAN</name>